<accession>Q17X65</accession>
<protein>
    <recommendedName>
        <fullName evidence="1">NH(3)-dependent NAD(+) synthetase</fullName>
        <ecNumber evidence="1">6.3.1.5</ecNumber>
    </recommendedName>
</protein>
<evidence type="ECO:0000255" key="1">
    <source>
        <dbReference type="HAMAP-Rule" id="MF_00193"/>
    </source>
</evidence>
<gene>
    <name evidence="1" type="primary">nadE</name>
    <name type="ordered locus">Hac_0991</name>
</gene>
<keyword id="KW-0067">ATP-binding</keyword>
<keyword id="KW-0436">Ligase</keyword>
<keyword id="KW-0460">Magnesium</keyword>
<keyword id="KW-0479">Metal-binding</keyword>
<keyword id="KW-0520">NAD</keyword>
<keyword id="KW-0547">Nucleotide-binding</keyword>
<dbReference type="EC" id="6.3.1.5" evidence="1"/>
<dbReference type="EMBL" id="AM260522">
    <property type="protein sequence ID" value="CAJ99761.1"/>
    <property type="molecule type" value="Genomic_DNA"/>
</dbReference>
<dbReference type="RefSeq" id="WP_011577871.1">
    <property type="nucleotide sequence ID" value="NC_008229.1"/>
</dbReference>
<dbReference type="SMR" id="Q17X65"/>
<dbReference type="STRING" id="382638.Hac_0991"/>
<dbReference type="GeneID" id="31758373"/>
<dbReference type="KEGG" id="hac:Hac_0991"/>
<dbReference type="eggNOG" id="COG0171">
    <property type="taxonomic scope" value="Bacteria"/>
</dbReference>
<dbReference type="HOGENOM" id="CLU_059327_1_2_7"/>
<dbReference type="OrthoDB" id="9799210at2"/>
<dbReference type="BioCyc" id="HACI382638:HAC_RS04260-MONOMER"/>
<dbReference type="UniPathway" id="UPA00253">
    <property type="reaction ID" value="UER00333"/>
</dbReference>
<dbReference type="Proteomes" id="UP000000775">
    <property type="component" value="Chromosome"/>
</dbReference>
<dbReference type="GO" id="GO:0005737">
    <property type="term" value="C:cytoplasm"/>
    <property type="evidence" value="ECO:0007669"/>
    <property type="project" value="InterPro"/>
</dbReference>
<dbReference type="GO" id="GO:0005524">
    <property type="term" value="F:ATP binding"/>
    <property type="evidence" value="ECO:0007669"/>
    <property type="project" value="UniProtKB-UniRule"/>
</dbReference>
<dbReference type="GO" id="GO:0004359">
    <property type="term" value="F:glutaminase activity"/>
    <property type="evidence" value="ECO:0007669"/>
    <property type="project" value="InterPro"/>
</dbReference>
<dbReference type="GO" id="GO:0046872">
    <property type="term" value="F:metal ion binding"/>
    <property type="evidence" value="ECO:0007669"/>
    <property type="project" value="UniProtKB-KW"/>
</dbReference>
<dbReference type="GO" id="GO:0003952">
    <property type="term" value="F:NAD+ synthase (glutamine-hydrolyzing) activity"/>
    <property type="evidence" value="ECO:0007669"/>
    <property type="project" value="InterPro"/>
</dbReference>
<dbReference type="GO" id="GO:0008795">
    <property type="term" value="F:NAD+ synthase activity"/>
    <property type="evidence" value="ECO:0007669"/>
    <property type="project" value="UniProtKB-UniRule"/>
</dbReference>
<dbReference type="GO" id="GO:0009435">
    <property type="term" value="P:NAD biosynthetic process"/>
    <property type="evidence" value="ECO:0007669"/>
    <property type="project" value="UniProtKB-UniRule"/>
</dbReference>
<dbReference type="CDD" id="cd00553">
    <property type="entry name" value="NAD_synthase"/>
    <property type="match status" value="1"/>
</dbReference>
<dbReference type="FunFam" id="3.40.50.620:FF:000106">
    <property type="entry name" value="Glutamine-dependent NAD(+) synthetase"/>
    <property type="match status" value="1"/>
</dbReference>
<dbReference type="Gene3D" id="3.40.50.620">
    <property type="entry name" value="HUPs"/>
    <property type="match status" value="1"/>
</dbReference>
<dbReference type="HAMAP" id="MF_00193">
    <property type="entry name" value="NadE_ammonia_dep"/>
    <property type="match status" value="1"/>
</dbReference>
<dbReference type="InterPro" id="IPR022310">
    <property type="entry name" value="NAD/GMP_synthase"/>
</dbReference>
<dbReference type="InterPro" id="IPR003694">
    <property type="entry name" value="NAD_synthase"/>
</dbReference>
<dbReference type="InterPro" id="IPR022926">
    <property type="entry name" value="NH(3)-dep_NAD(+)_synth"/>
</dbReference>
<dbReference type="InterPro" id="IPR014729">
    <property type="entry name" value="Rossmann-like_a/b/a_fold"/>
</dbReference>
<dbReference type="NCBIfam" id="TIGR00552">
    <property type="entry name" value="nadE"/>
    <property type="match status" value="1"/>
</dbReference>
<dbReference type="NCBIfam" id="NF010587">
    <property type="entry name" value="PRK13980.1"/>
    <property type="match status" value="1"/>
</dbReference>
<dbReference type="PANTHER" id="PTHR23090:SF9">
    <property type="entry name" value="GLUTAMINE-DEPENDENT NAD(+) SYNTHETASE"/>
    <property type="match status" value="1"/>
</dbReference>
<dbReference type="PANTHER" id="PTHR23090">
    <property type="entry name" value="NH 3 /GLUTAMINE-DEPENDENT NAD + SYNTHETASE"/>
    <property type="match status" value="1"/>
</dbReference>
<dbReference type="Pfam" id="PF02540">
    <property type="entry name" value="NAD_synthase"/>
    <property type="match status" value="1"/>
</dbReference>
<dbReference type="SUPFAM" id="SSF52402">
    <property type="entry name" value="Adenine nucleotide alpha hydrolases-like"/>
    <property type="match status" value="1"/>
</dbReference>
<reference key="1">
    <citation type="journal article" date="2006" name="PLoS Genet.">
        <title>Who ate whom? Adaptive Helicobacter genomic changes that accompanied a host jump from early humans to large felines.</title>
        <authorList>
            <person name="Eppinger M."/>
            <person name="Baar C."/>
            <person name="Linz B."/>
            <person name="Raddatz G."/>
            <person name="Lanz C."/>
            <person name="Keller H."/>
            <person name="Morelli G."/>
            <person name="Gressmann H."/>
            <person name="Achtman M."/>
            <person name="Schuster S.C."/>
        </authorList>
    </citation>
    <scope>NUCLEOTIDE SEQUENCE [LARGE SCALE GENOMIC DNA]</scope>
    <source>
        <strain>Sheeba</strain>
    </source>
</reference>
<name>NADE_HELAH</name>
<feature type="chain" id="PRO_1000077559" description="NH(3)-dependent NAD(+) synthetase">
    <location>
        <begin position="1"/>
        <end position="260"/>
    </location>
</feature>
<feature type="binding site" evidence="1">
    <location>
        <begin position="31"/>
        <end position="38"/>
    </location>
    <ligand>
        <name>ATP</name>
        <dbReference type="ChEBI" id="CHEBI:30616"/>
    </ligand>
</feature>
<feature type="binding site" evidence="1">
    <location>
        <position position="37"/>
    </location>
    <ligand>
        <name>Mg(2+)</name>
        <dbReference type="ChEBI" id="CHEBI:18420"/>
    </ligand>
</feature>
<feature type="binding site" evidence="1">
    <location>
        <position position="112"/>
    </location>
    <ligand>
        <name>deamido-NAD(+)</name>
        <dbReference type="ChEBI" id="CHEBI:58437"/>
    </ligand>
</feature>
<feature type="binding site" evidence="1">
    <location>
        <position position="132"/>
    </location>
    <ligand>
        <name>ATP</name>
        <dbReference type="ChEBI" id="CHEBI:30616"/>
    </ligand>
</feature>
<feature type="binding site" evidence="1">
    <location>
        <position position="137"/>
    </location>
    <ligand>
        <name>Mg(2+)</name>
        <dbReference type="ChEBI" id="CHEBI:18420"/>
    </ligand>
</feature>
<feature type="binding site" evidence="1">
    <location>
        <position position="161"/>
    </location>
    <ligand>
        <name>ATP</name>
        <dbReference type="ChEBI" id="CHEBI:30616"/>
    </ligand>
</feature>
<feature type="binding site" evidence="1">
    <location>
        <position position="183"/>
    </location>
    <ligand>
        <name>ATP</name>
        <dbReference type="ChEBI" id="CHEBI:30616"/>
    </ligand>
</feature>
<organism>
    <name type="scientific">Helicobacter acinonychis (strain Sheeba)</name>
    <dbReference type="NCBI Taxonomy" id="382638"/>
    <lineage>
        <taxon>Bacteria</taxon>
        <taxon>Pseudomonadati</taxon>
        <taxon>Campylobacterota</taxon>
        <taxon>Epsilonproteobacteria</taxon>
        <taxon>Campylobacterales</taxon>
        <taxon>Helicobacteraceae</taxon>
        <taxon>Helicobacter</taxon>
    </lineage>
</organism>
<proteinExistence type="inferred from homology"/>
<comment type="function">
    <text evidence="1">Catalyzes the ATP-dependent amidation of deamido-NAD to form NAD. Uses ammonia as a nitrogen source.</text>
</comment>
<comment type="catalytic activity">
    <reaction evidence="1">
        <text>deamido-NAD(+) + NH4(+) + ATP = AMP + diphosphate + NAD(+) + H(+)</text>
        <dbReference type="Rhea" id="RHEA:21188"/>
        <dbReference type="ChEBI" id="CHEBI:15378"/>
        <dbReference type="ChEBI" id="CHEBI:28938"/>
        <dbReference type="ChEBI" id="CHEBI:30616"/>
        <dbReference type="ChEBI" id="CHEBI:33019"/>
        <dbReference type="ChEBI" id="CHEBI:57540"/>
        <dbReference type="ChEBI" id="CHEBI:58437"/>
        <dbReference type="ChEBI" id="CHEBI:456215"/>
        <dbReference type="EC" id="6.3.1.5"/>
    </reaction>
</comment>
<comment type="pathway">
    <text evidence="1">Cofactor biosynthesis; NAD(+) biosynthesis; NAD(+) from deamido-NAD(+) (ammonia route): step 1/1.</text>
</comment>
<comment type="subunit">
    <text evidence="1">Homodimer.</text>
</comment>
<comment type="similarity">
    <text evidence="1">Belongs to the NAD synthetase family.</text>
</comment>
<sequence>MQKHYHKLISYLCDFLEKETQKRGFKKVVYGLSGGLDSAVVGVLSQKVFKENAHALLMPSLVSMPESKSDALDLCETFSIPYTEYSIAPYDAIFCSYFKDASLTRKGNFCSRLRMAFLYDYSLKSNSLVIGTSNKSERMLGYGTLFGDLACAINPIGELFKTEVYELAQHLNIPKKILDKPPSADLFVGQSDEKDLGYPYSVIDPLLKDIEALFRTKPIHLETLTQLGYDETLVKNTISRIQKNAFKLELPTIAKRFDPK</sequence>